<reference key="1">
    <citation type="journal article" date="1989" name="Plant Cell">
        <title>Characterization of the glycinin gene family in soybean.</title>
        <authorList>
            <person name="Nielsen N.C."/>
            <person name="Dickinson C.D."/>
            <person name="Cho T.-J."/>
            <person name="Thanh V.H."/>
            <person name="Scallon B.J."/>
            <person name="Fischer R.L."/>
            <person name="Sims T.L."/>
            <person name="Drews G.N."/>
            <person name="Goldberg R.B."/>
        </authorList>
    </citation>
    <scope>NUCLEOTIDE SEQUENCE (ISOFORM 1)</scope>
    <scope>FUNCTION</scope>
    <scope>TISSUE SPECIFICITY</scope>
    <scope>DEVELOPMENTAL STAGE</scope>
    <scope>GENE FAMILY</scope>
    <source>
        <strain>cv. Dare</strain>
        <tissue>Leaf</tissue>
    </source>
</reference>
<reference key="2">
    <citation type="journal article" date="1985" name="J. Biol. Chem.">
        <title>Glycinin A3B4 mRNA. Cloning and sequencing of double-stranded cDNA complementary to a soybean storage protein.</title>
        <authorList>
            <person name="Fukazawa C."/>
            <person name="Momma T."/>
            <person name="Hirano H."/>
            <person name="Harada K."/>
            <person name="Udaka K."/>
        </authorList>
    </citation>
    <scope>NUCLEOTIDE SEQUENCE [MRNA] (ISOFORM 1)</scope>
    <source>
        <strain>cv. Bonminori</strain>
        <tissue>Cotyledon</tissue>
    </source>
</reference>
<reference key="3">
    <citation type="submission" date="1996-12" db="EMBL/GenBank/DDBJ databases">
        <title>Glycine max mRNA for glycinin.</title>
        <authorList>
            <person name="Fukazawa C."/>
        </authorList>
    </citation>
    <scope>NUCLEOTIDE SEQUENCE [MRNA] (ISOFORM 1)</scope>
    <source>
        <strain>cv. Bonminori</strain>
    </source>
</reference>
<reference key="4">
    <citation type="submission" date="1997-05" db="EMBL/GenBank/DDBJ databases">
        <title>cloning of A3B4 glycinin gene from soybean.</title>
        <authorList>
            <person name="Chen S."/>
            <person name="Arahira M."/>
            <person name="Fukazawa C."/>
        </authorList>
    </citation>
    <scope>NUCLEOTIDE SEQUENCE [GENOMIC DNA]</scope>
    <source>
        <strain>cv. Williams 82</strain>
        <tissue>Leaf</tissue>
    </source>
</reference>
<reference key="5">
    <citation type="submission" date="2000-09" db="EMBL/GenBank/DDBJ databases">
        <title>cDNA of Glycinin A3B4 Subunit.</title>
        <authorList>
            <person name="Adachi M."/>
            <person name="Katsube T."/>
            <person name="Masuda T."/>
            <person name="Utsumi S."/>
        </authorList>
    </citation>
    <scope>NUCLEOTIDE SEQUENCE [MRNA] (ISOFORM 1)</scope>
    <source>
        <strain>cv. Wasesuzunari</strain>
        <tissue>Cotyledon</tissue>
    </source>
</reference>
<reference key="6">
    <citation type="submission" date="2008-12" db="EMBL/GenBank/DDBJ databases">
        <title>The molecule mechanism of mutant soybean cultivars lacking the glycinin A3B4 subunit.</title>
        <authorList>
            <person name="Liu Z."/>
            <person name="Wang H."/>
            <person name="Ma H."/>
        </authorList>
    </citation>
    <scope>NUCLEOTIDE SEQUENCE [MRNA] (ISOFORM 2)</scope>
    <source>
        <strain>cv. Heidou No.1</strain>
    </source>
</reference>
<reference key="7">
    <citation type="submission" date="2009-08" db="EMBL/GenBank/DDBJ databases">
        <authorList>
            <person name="Cheung F."/>
            <person name="Xiao Y."/>
            <person name="Chan A."/>
            <person name="Moskal W."/>
            <person name="Town C.D."/>
        </authorList>
    </citation>
    <scope>NUCLEOTIDE SEQUENCE [MRNA] OF 1-429 (ISOFORM 1/2)</scope>
</reference>
<reference key="8">
    <citation type="journal article" date="2000" name="J. Biotechnol.">
        <title>The effect of pH on heat denaturation and gel forming properties of soy proteins.</title>
        <authorList>
            <person name="Renkema J.M."/>
            <person name="Lakemond C.M."/>
            <person name="de Jongh H.H."/>
            <person name="Gruppen H."/>
            <person name="van Vliet T."/>
        </authorList>
    </citation>
    <scope>BIOTECHNOLOGY</scope>
</reference>
<reference key="9">
    <citation type="journal article" date="2007" name="Plant Physiol. Biochem.">
        <title>Proteomic and genetic analysis of glycinin subunits of sixteen soybean genotypes.</title>
        <authorList>
            <person name="Natarajan S."/>
            <person name="Xu C."/>
            <person name="Bae H."/>
            <person name="Bailey B.A."/>
            <person name="Cregan P."/>
            <person name="Caperna T.J."/>
            <person name="Garrett W.M."/>
            <person name="Luthria D."/>
        </authorList>
    </citation>
    <scope>POLYMORPHISM</scope>
    <scope>IDENTIFICATION BY MASS SPECTROMETRY</scope>
</reference>
<reference key="10">
    <citation type="journal article" date="2009" name="J. Allergy Clin. Immunol.">
        <title>Soybean (Glycine max) allergy in Europe: Gly m 5 (beta-conglycinin) and Gly m 6 (glycinin) are potential diagnostic markers for severe allergic reactions to soy.</title>
        <authorList>
            <person name="Holzhauser T."/>
            <person name="Wackermann O."/>
            <person name="Ballmer-Weber B.K."/>
            <person name="Bindslev-Jensen C."/>
            <person name="Scibilia J."/>
            <person name="Perono-Garoffo L."/>
            <person name="Utsumi S."/>
            <person name="Poulsen L.K."/>
            <person name="Vieths S."/>
        </authorList>
    </citation>
    <scope>ALLERGEN</scope>
</reference>
<reference key="11">
    <citation type="journal article" date="2012" name="Int. J. Food Microbiol.">
        <title>In vitro and in situ antimicrobial action and mechanism of glycinin and its basic subunit.</title>
        <authorList>
            <person name="Sitohy M.Z."/>
            <person name="Mahgoub S.A."/>
            <person name="Osman A.O."/>
        </authorList>
    </citation>
    <scope>FUNCTION</scope>
    <scope>BIOTECHNOLOGY</scope>
</reference>
<reference key="12">
    <citation type="journal article" date="2013" name="Acta Crystallogr. F">
        <title>Purification, crystallization and preliminary crystallographic analysis of soybean mature glycinin A1bB2.</title>
        <authorList>
            <person name="Prak K."/>
            <person name="Mikami B."/>
            <person name="Itoh T."/>
            <person name="Fukuda T."/>
            <person name="Maruyama N."/>
            <person name="Utsumi S."/>
        </authorList>
    </citation>
    <scope>GENE FAMILY</scope>
    <scope>NOMENCLATURE</scope>
</reference>
<reference key="13">
    <citation type="journal article" date="2013" name="J. Sci. Food Agric.">
        <title>Epitopes from two soybean glycinin subunits are antigenic in pigs.</title>
        <authorList>
            <person name="Taliercio E."/>
            <person name="Kim S.W."/>
        </authorList>
    </citation>
    <scope>ALLERGEN</scope>
</reference>
<reference key="14">
    <citation type="journal article" date="2014" name="Crit. Rev. Food Sci. Nutr.">
        <title>Advances of research on glycinin and beta-conglycinin: a review of two major soybean allergenic proteins.</title>
        <authorList>
            <person name="Wang T."/>
            <person name="Qin G.-X."/>
            <person name="Sun Z.-W."/>
            <person name="Zhao Y."/>
        </authorList>
    </citation>
    <scope>ALLERGEN</scope>
    <scope>REVIEW</scope>
</reference>
<reference key="15">
    <citation type="journal article" date="2015" name="Innovative Food Sci. Emerg. Technol.">
        <title>Antibacterial activities and membrane permeability actions of glycinin basic peptide against Escherichia coli.</title>
        <authorList>
            <person name="Li Y.-Q."/>
            <person name="Sun X.-X."/>
            <person name="Feng J.-L."/>
            <person name="Mo H.-Z."/>
        </authorList>
    </citation>
    <scope>FUNCTION</scope>
    <scope>BIOTECHNOLOGY</scope>
</reference>
<reference key="16">
    <citation type="journal article" date="2016" name="Food Sci. Biotechnol.">
        <title>Effects of glycinin basic polypeptide on sensory and physicochemical properties of chilled pork.</title>
        <authorList>
            <person name="Li Y.-Q."/>
            <person name="Hao M."/>
            <person name="Yang J."/>
            <person name="Mo H.-Z."/>
        </authorList>
    </citation>
    <scope>BIOTECHNOLOGY</scope>
</reference>
<reference key="17">
    <citation type="journal article" date="2016" name="J. Sci. Food Agric.">
        <title>Thermal aggregation behaviour of soy protein: characteristics of different polypeptides and sub-units.</title>
        <authorList>
            <person name="He X.-T."/>
            <person name="Yuan D.-B."/>
            <person name="Wang J.-M."/>
            <person name="Yang X.-Q."/>
        </authorList>
    </citation>
    <scope>BIOTECHNOLOGY</scope>
</reference>
<reference key="18">
    <citation type="journal article" date="2016" name="Peptides">
        <title>Methodology for identification of pore forming antimicrobial peptides from soy protein subunits beta-conglycinin and glycinin.</title>
        <authorList>
            <person name="Xiang N."/>
            <person name="Lyu Y."/>
            <person name="Zhu X."/>
            <person name="Bhunia A.K."/>
            <person name="Narsimhan G."/>
        </authorList>
    </citation>
    <scope>BIOTECHNOLOGY</scope>
</reference>
<reference key="19">
    <citation type="journal article" date="2017" name="J. Agric. Food Chem.">
        <title>Antibacterial actions of glycinin basic peptide against Escherichia coli.</title>
        <authorList>
            <person name="Zhao G.-P."/>
            <person name="Li Y.-Q."/>
            <person name="Sun G.-J."/>
            <person name="Mo H.-Z."/>
        </authorList>
    </citation>
    <scope>FUNCTION</scope>
    <scope>BIOTECHNOLOGY</scope>
</reference>
<reference key="20">
    <citation type="journal article" date="2017" name="J. Sci. Food Agric.">
        <title>The structural properties and antigenicity of soybean glycinin by glycation with xylose.</title>
        <authorList>
            <person name="Bu G."/>
            <person name="Zhu T."/>
            <person name="Chen F."/>
        </authorList>
    </citation>
    <scope>ALLERGEN</scope>
</reference>
<reference key="21">
    <citation type="journal article" date="2018" name="Food Chem.">
        <title>Peptides derived from in vitro gastrointestinal digestion of germinated soybean proteins inhibit human colon cancer cells proliferation and inflammation.</title>
        <authorList>
            <person name="Gonzalez-Montoya M."/>
            <person name="Hernandez-Ledesma B."/>
            <person name="Silvan J.M."/>
            <person name="Mora-Escobedo R."/>
            <person name="Martinez-Villaluenga C."/>
        </authorList>
    </citation>
    <scope>PTM</scope>
    <scope>BIOTECHNOLOGY</scope>
    <scope>IDENTIFICATION BY MASS SPECTROMETRY</scope>
</reference>
<reference key="22">
    <citation type="journal article" date="2018" name="Int. J. Mol. Sci.">
        <title>Bioactive peptides from germinated soybean with anti-diabetic potential by inhibition of dipeptidyl peptidase-IV, alpha-amylase, and alpha-glucosidase enzymes.</title>
        <authorList>
            <person name="Gonzalez-Montoya M."/>
            <person name="Hernandez-Ledesma B."/>
            <person name="Mora-Escobedo R."/>
            <person name="Martinez-Villaluenga C."/>
        </authorList>
    </citation>
    <scope>BIOTECHNOLOGY</scope>
    <scope>IDENTIFICATION BY MASS SPECTROMETRY</scope>
</reference>
<reference key="23">
    <citation type="journal article" date="2018" name="J. Agric. Food Chem.">
        <title>Soybean Glycinin- and beta-Conglycinin-Induced Intestinal Damage in Piglets via the p38/JNK/NF-kappaB Signaling Pathway.</title>
        <authorList>
            <person name="Peng C."/>
            <person name="Cao C."/>
            <person name="He M."/>
            <person name="Shu Y."/>
            <person name="Tang X."/>
            <person name="Wang Y."/>
            <person name="Zhang Y."/>
            <person name="Xia X."/>
            <person name="Li Y."/>
            <person name="Wu J."/>
        </authorList>
    </citation>
    <scope>ALLERGEN</scope>
</reference>
<reference key="24">
    <citation type="journal article" date="2018" name="J. Agric. Food Chem.">
        <title>Molecular Mechanism for Improving Emulsification Efficiency of Soy Glycinin by Glycation with Soy Soluble Polysaccharide.</title>
        <authorList>
            <person name="Peng X.Q."/>
            <person name="Xu Y.T."/>
            <person name="Liu T.X."/>
            <person name="Tang C.H."/>
        </authorList>
    </citation>
    <scope>BIOTECHNOLOGY</scope>
</reference>
<reference key="25">
    <citation type="journal article" date="2018" name="Sci. Rep.">
        <title>A vacuolar sorting receptor-independent sorting mechanism for storage vacuoles in soybean seeds.</title>
        <authorList>
            <person name="Maruyama N."/>
            <person name="Matsuoka Y."/>
            <person name="Yokoyama K."/>
            <person name="Takagi K."/>
            <person name="Yamada T."/>
            <person name="Hasegawa H."/>
            <person name="Terakawa T."/>
            <person name="Ishimoto M."/>
        </authorList>
    </citation>
    <scope>SUBCELLULAR LOCATION</scope>
</reference>
<reference key="26">
    <citation type="journal article" date="2018" name="Vet. Immunol. Immunopathol.">
        <title>Acidic polypeptides A1a, A3 and A4 of Gly m 6 (glycinin) are allergenic for piglets.</title>
        <authorList>
            <person name="Zheng S."/>
            <person name="Qin G."/>
            <person name="Chen J."/>
            <person name="Zhang F."/>
        </authorList>
    </citation>
    <scope>ALLERGEN</scope>
</reference>
<reference key="27">
    <citation type="journal article" date="2019" name="Fish Shellfish Immunol.">
        <title>Effects of glycinin and beta-conglycinin on growth performance and intestinal health in juvenile Chinese mitten crabs (Eriocheir sinensis).</title>
        <authorList>
            <person name="Han F."/>
            <person name="Wang X."/>
            <person name="Guo J."/>
            <person name="Qi C."/>
            <person name="Xu C."/>
            <person name="Luo Y."/>
            <person name="Li E."/>
            <person name="Qin J.G."/>
            <person name="Chen L."/>
        </authorList>
    </citation>
    <scope>ALLERGEN</scope>
</reference>
<reference key="28">
    <citation type="journal article" date="2003" name="Proc. Natl. Acad. Sci. U.S.A.">
        <title>Crystal structure of soybean 11S globulin: glycinin A3B4 homohexamer.</title>
        <authorList>
            <person name="Adachi M."/>
            <person name="Kanamori J."/>
            <person name="Masuda T."/>
            <person name="Yagasaki K."/>
            <person name="Kitamura K."/>
            <person name="Mikami B."/>
            <person name="Utsumi S."/>
        </authorList>
    </citation>
    <scope>X-RAY CRYSTALLOGRAPHY (2.10 ANGSTROMS) OF 26-516</scope>
    <scope>SUBUNIT</scope>
    <scope>DISULFIDE BONDS</scope>
</reference>
<reference key="29">
    <citation type="journal article" date="2010" name="Biochim. Biophys. Acta">
        <title>Conservation and divergence on plant seed 11S globulins based on crystal structures.</title>
        <authorList>
            <person name="Tandang-Silvas M.R.G."/>
            <person name="Fukuda T."/>
            <person name="Fukuda C."/>
            <person name="Prak K."/>
            <person name="Cabanos C."/>
            <person name="Kimura A."/>
            <person name="Itoh T."/>
            <person name="Mikami B."/>
            <person name="Utsumi S."/>
            <person name="Maruyama N."/>
        </authorList>
    </citation>
    <scope>X-RAY CRYSTALLOGRAPHY (1.90 ANGSTROMS) OF 25-516</scope>
    <scope>SUBUNIT</scope>
    <scope>DISULFIDE BONDS</scope>
</reference>
<sequence>MGKPFFTLSLSSLCLLLLSSACFAITSSKFNECQLNNLNALEPDHRVESEGGLIETWNSQHPELQCAGVTVSKRTLNRNGSHLPSYLPYPQMIIVVQGKGAIGFAFPGCPETFEKPQQQSSRRGSRSQQQLQDSHQKIRHFNEGDVLVIPLGVPYWTYNTGDEPVVAISPLDTSNFNNQLDQNPRVFYLAGNPDIEHPETMQQQQQQKSHGGRKQGQHRQQEEEGGSVLSGFSKHFLAQSFNTNEDTAEKLRSPDDERKQIVTVEGGLSVISPKWQEQEDEDEDEDEEYGRTPSYPPRRPSHGKHEDDEDEDEEEDQPRPDHPPQRPSRPEQQEPRGRGCQTRNGVEENICTMKLHENIARPSRADFYNPKAGRISTLNSLTLPALRQFGLSAQYVVLYRNGIYSPDWNLNANSVTMTRGKGRVRVVNCQGNAVFDGELRRGQLLVVPQNPAVAEQGGEQGLEYVVFKTHHNAVSSYIKDVFRVIPSEVLSNSYNLGQSQVRQLKYQGNSGPLVNP</sequence>
<comment type="function">
    <text evidence="8 10 14 23">Glycinin is the major seed storage protein of soybean (PubMed:2485233). Glycinin basic peptides (GBPs), and, to a lower extent, glycinin exhibit antibacterial activity against Gram-negative and Gram-positive bacteria (e.g. L.monocytogenes, B.subtilis, E.coli and S.enteritidis) by forming pores and aggregating in transmembranes, leading to membrane permeability and, eventually, cell death (PubMed:22236762, PubMed:28590128, Ref.15).</text>
</comment>
<comment type="subunit">
    <text evidence="5 7">Hexamer; each subunit is composed of an acidic and a basic chain derived from a single precursor and linked by a disulfide bond.</text>
</comment>
<comment type="subcellular location">
    <subcellularLocation>
        <location>Vacuole</location>
        <location>Aleurone grain</location>
    </subcellularLocation>
    <subcellularLocation>
        <location evidence="16">Endoplasmic reticulum</location>
    </subcellularLocation>
    <subcellularLocation>
        <location evidence="16">Protein storage vacuole</location>
    </subcellularLocation>
    <text evidence="16">Hexamers are assembled in the endoplasmic reticulum and later sorted to the protein storage vacuoles (PubMed:29348620). Cotyledonary membrane-bound vacuolar protein bodies.</text>
</comment>
<comment type="alternative products">
    <event type="alternative splicing"/>
    <isoform>
        <id>P04347-1</id>
        <name>1</name>
        <sequence type="displayed"/>
    </isoform>
    <isoform>
        <id>P04347-2</id>
        <name>2</name>
        <sequence type="described" ref="VSP_060146"/>
    </isoform>
</comment>
<comment type="tissue specificity">
    <text evidence="10">Exclusively in seeds during embryogenesis.</text>
</comment>
<comment type="developmental stage">
    <text evidence="10">Accumulates early during embryogenesis, but repressed late in seed development.</text>
</comment>
<comment type="PTM">
    <text evidence="15">During soybean germination, seed storage proteins are hydrolyzed by protease/26S proteasome.</text>
</comment>
<comment type="allergen">
    <text evidence="6 9 13 17 18 21 26">Causes an allergic reaction in human and animals (e.g. rats, mouse and piglets); the acidic subunit is particularly allergenic (PubMed:18996574, PubMed:23426933, PubMed:24499064, PubMed:30078589). Binds to IgE of patients with severe allergic reactions (anaphylaxis) to soybean (PubMed:18996574). Allergy to soybean is most common for infants (usually appears at the age of three months) which frequently outgrow their soybean allergy by the age of two, but a severe soybean allergy can last a lifetime; various symptoms involve skin, gastrointestinal tract and respiratory tracts (PubMed:24499064). Damaged intestinal function in piglets is associated with glycinin-mediated perturbation of nuclear factor-kappa B (NF-kappaB), Jun N-terminal kinase (JNK) and p38 levels (PubMed:30139257). Juvenile Chinese mitten crabs (E.sinensis) supplemented with glycinin display impaired growth and altered intestinal health due to gut inflammation, reshaped community of gut microbiota and digestive dysfunction (PubMed:30300740). Ingredient processing methods to reduce soybean allergenicity but keeping its nutritional values have been developed, among them physical processing includes extrusion, high-pressure (&gt;300 MPa), heating (between 70 and 90 degrees Celsius), roasting, chemical processing includes ethanol extraction (55-76 percent between 70 and 80 degrees Celsius), in vitro glycation (e.g. with xylose at 55 degrees Celsius) and enzymatic hydrolysis with pepsin and trypsin, and biological processing includes fermentation with A.oryzae, S.cerevisiae, L.lactic subsplactis, B.subtilis, B.lactic and L.plantarum (PubMed:24499064, PubMed:27620509). Resistant to hydrolysis by papain, alcalase, and fungal protease (PubMed:24499064).</text>
</comment>
<comment type="biotechnology">
    <text evidence="4 8 11 12 14 15 19 20 22 23">Emulsification efficiency of glycinin is improved by degree-dependent glycation with soy soluble polysaccharide (SSPS) at 60 degrees Celsius in both the acidic (A) and basic (B) polypeptides as a result of subunit dissociation at the quaternary level (PubMed:30372068). Thermal treatment of soybean seed proteins leads to the aggregation of glycinin acidic and basic polypeptides (GAP and GBP, respectively) (PubMed:10867183, PubMed:25801436). GBP improve sensory properties of meat (e.g. pork) during chilled storage and inhibit bacterial growth (e.g. L.monocytogenes, B.subtilis, E.coli and S.enteritidis) (PubMed:22236762, PubMed:30263339). Antibacterial properties of the GBP antimicrobial peptides (AMPs) associated with no cytotoxicity on the viability of human embryonic kidney cells make them promising candidates as natural antibacterial agents (PubMed:22236762, PubMed:28590128, Ref.15). The commercially synthesized peptide G5466 (250-269) exhibits antimicrobial activity toward L.monocytogenes and E.coli probably by forming pores and aggregating in transmembranes, thus being a promising candidate as a natural antibacterial agent (PubMed:27612614). Fragmented peptides resulting from gastrointestinal digestion of germinated soybeans seem to have anticancer and anti-inflammatory actions on human colon cancer cells (e.g. Caco-2, HT-29, and HCT-116) and macrophages (LPS-stimulated RAW 264.7) (PubMed:29037738). Such peptides resulting from digested germinated soybeans exhibit also anti-diabetic potential by inhibiting dipeptidyl peptidase IV (DPP-IV), salivary alpha-amylase and intestinal alpha-glucosidase enzymes (PubMed:30249015).</text>
</comment>
<comment type="similarity">
    <text evidence="29">Belongs to the 11S seed storage protein (globulins) family.</text>
</comment>
<protein>
    <recommendedName>
        <fullName evidence="24 27">Glycinin G5</fullName>
        <shortName evidence="28">Glycinin 11S G5</shortName>
        <shortName evidence="25">Glycinin A3B4</shortName>
    </recommendedName>
    <allergenName evidence="29">Gly m 6</allergenName>
    <component>
        <recommendedName>
            <fullName evidence="24 25">Glycinin A3 subunit</fullName>
        </recommendedName>
    </component>
    <component>
        <recommendedName>
            <fullName evidence="24 25">Glycinin B4 subunit</fullName>
        </recommendedName>
    </component>
</protein>
<gene>
    <name evidence="27" type="primary">GY5</name>
    <name evidence="29" type="ordered locus">Glyma13g18450</name>
</gene>
<evidence type="ECO:0000255" key="1"/>
<evidence type="ECO:0000255" key="2">
    <source>
        <dbReference type="PROSITE-ProRule" id="PRU00498"/>
    </source>
</evidence>
<evidence type="ECO:0000256" key="3">
    <source>
        <dbReference type="SAM" id="MobiDB-lite"/>
    </source>
</evidence>
<evidence type="ECO:0000269" key="4">
    <source>
    </source>
</evidence>
<evidence type="ECO:0000269" key="5">
    <source>
    </source>
</evidence>
<evidence type="ECO:0000269" key="6">
    <source>
    </source>
</evidence>
<evidence type="ECO:0000269" key="7">
    <source>
    </source>
</evidence>
<evidence type="ECO:0000269" key="8">
    <source>
    </source>
</evidence>
<evidence type="ECO:0000269" key="9">
    <source>
    </source>
</evidence>
<evidence type="ECO:0000269" key="10">
    <source>
    </source>
</evidence>
<evidence type="ECO:0000269" key="11">
    <source>
    </source>
</evidence>
<evidence type="ECO:0000269" key="12">
    <source>
    </source>
</evidence>
<evidence type="ECO:0000269" key="13">
    <source>
    </source>
</evidence>
<evidence type="ECO:0000269" key="14">
    <source>
    </source>
</evidence>
<evidence type="ECO:0000269" key="15">
    <source>
    </source>
</evidence>
<evidence type="ECO:0000269" key="16">
    <source>
    </source>
</evidence>
<evidence type="ECO:0000269" key="17">
    <source>
    </source>
</evidence>
<evidence type="ECO:0000269" key="18">
    <source>
    </source>
</evidence>
<evidence type="ECO:0000269" key="19">
    <source>
    </source>
</evidence>
<evidence type="ECO:0000269" key="20">
    <source>
    </source>
</evidence>
<evidence type="ECO:0000269" key="21">
    <source>
    </source>
</evidence>
<evidence type="ECO:0000269" key="22">
    <source>
    </source>
</evidence>
<evidence type="ECO:0000269" key="23">
    <source ref="15"/>
</evidence>
<evidence type="ECO:0000303" key="24">
    <source>
    </source>
</evidence>
<evidence type="ECO:0000303" key="25">
    <source>
    </source>
</evidence>
<evidence type="ECO:0000303" key="26">
    <source>
    </source>
</evidence>
<evidence type="ECO:0000303" key="27">
    <source>
    </source>
</evidence>
<evidence type="ECO:0000303" key="28">
    <source>
    </source>
</evidence>
<evidence type="ECO:0000305" key="29"/>
<evidence type="ECO:0007829" key="30">
    <source>
        <dbReference type="PDB" id="2D5F"/>
    </source>
</evidence>
<evidence type="ECO:0007829" key="31">
    <source>
        <dbReference type="PDB" id="2D5H"/>
    </source>
</evidence>
<dbReference type="EMBL" id="M10962">
    <property type="protein sequence ID" value="AAA33964.1"/>
    <property type="molecule type" value="mRNA"/>
</dbReference>
<dbReference type="EMBL" id="AB000168">
    <property type="protein sequence ID" value="BAA19058.1"/>
    <property type="molecule type" value="mRNA"/>
</dbReference>
<dbReference type="EMBL" id="AB000169">
    <property type="protein sequence ID" value="BAA19059.1"/>
    <property type="molecule type" value="mRNA"/>
</dbReference>
<dbReference type="EMBL" id="AB003680">
    <property type="protein sequence ID" value="BAA74952.1"/>
    <property type="molecule type" value="Genomic_DNA"/>
</dbReference>
<dbReference type="EMBL" id="AB049440">
    <property type="protein sequence ID" value="BAB15802.1"/>
    <property type="molecule type" value="mRNA"/>
</dbReference>
<dbReference type="EMBL" id="FJ599666">
    <property type="protein sequence ID" value="ACN11532.1"/>
    <property type="molecule type" value="mRNA"/>
</dbReference>
<dbReference type="EMBL" id="BT093334">
    <property type="protein sequence ID" value="ACU17712.1"/>
    <property type="molecule type" value="mRNA"/>
</dbReference>
<dbReference type="PIR" id="A92524">
    <property type="entry name" value="FWSYG3"/>
</dbReference>
<dbReference type="PIR" id="PQ0200">
    <property type="entry name" value="PQ0200"/>
</dbReference>
<dbReference type="PIR" id="PQ0806">
    <property type="entry name" value="PQ0806"/>
</dbReference>
<dbReference type="PIR" id="PQ0807">
    <property type="entry name" value="PQ0807"/>
</dbReference>
<dbReference type="PIR" id="PQ0808">
    <property type="entry name" value="PQ0808"/>
</dbReference>
<dbReference type="RefSeq" id="NP_001236676.1">
    <property type="nucleotide sequence ID" value="NM_001249747.2"/>
</dbReference>
<dbReference type="PDB" id="1OD5">
    <property type="method" value="X-ray"/>
    <property type="resolution" value="2.10 A"/>
    <property type="chains" value="A/B=26-516"/>
</dbReference>
<dbReference type="PDB" id="2D5F">
    <property type="method" value="X-ray"/>
    <property type="resolution" value="1.90 A"/>
    <property type="chains" value="A/B=25-516"/>
</dbReference>
<dbReference type="PDB" id="2D5H">
    <property type="method" value="X-ray"/>
    <property type="resolution" value="2.80 A"/>
    <property type="chains" value="A/B/C/D/E/F=25-516"/>
</dbReference>
<dbReference type="PDBsum" id="1OD5"/>
<dbReference type="PDBsum" id="2D5F"/>
<dbReference type="PDBsum" id="2D5H"/>
<dbReference type="SMR" id="P04347"/>
<dbReference type="FunCoup" id="P04347">
    <property type="interactions" value="92"/>
</dbReference>
<dbReference type="STRING" id="3847.P04347"/>
<dbReference type="Allergome" id="5821">
    <property type="allergen name" value="Gly m 6"/>
</dbReference>
<dbReference type="Allergome" id="5826">
    <property type="allergen name" value="Gly m 6.0501"/>
</dbReference>
<dbReference type="TCDB" id="1.C.121.1.2">
    <property type="family name" value="the soybean glycinin-derived pore-forming peptide (sgpp) family"/>
</dbReference>
<dbReference type="GlyCosmos" id="P04347">
    <property type="glycosylation" value="1 site, No reported glycans"/>
</dbReference>
<dbReference type="PaxDb" id="3847-GLYMA13G18450.2"/>
<dbReference type="GeneID" id="547452"/>
<dbReference type="KEGG" id="gmx:547452"/>
<dbReference type="eggNOG" id="ENOG502QU1J">
    <property type="taxonomic scope" value="Eukaryota"/>
</dbReference>
<dbReference type="InParanoid" id="P04347"/>
<dbReference type="OrthoDB" id="1903982at2759"/>
<dbReference type="EvolutionaryTrace" id="P04347"/>
<dbReference type="Proteomes" id="UP000008827">
    <property type="component" value="Unplaced"/>
</dbReference>
<dbReference type="GO" id="GO:0033095">
    <property type="term" value="C:aleurone grain"/>
    <property type="evidence" value="ECO:0007669"/>
    <property type="project" value="UniProtKB-SubCell"/>
</dbReference>
<dbReference type="GO" id="GO:0005783">
    <property type="term" value="C:endoplasmic reticulum"/>
    <property type="evidence" value="ECO:0000314"/>
    <property type="project" value="UniProtKB"/>
</dbReference>
<dbReference type="GO" id="GO:0000326">
    <property type="term" value="C:protein storage vacuole"/>
    <property type="evidence" value="ECO:0000314"/>
    <property type="project" value="UniProtKB"/>
</dbReference>
<dbReference type="GO" id="GO:0045735">
    <property type="term" value="F:nutrient reservoir activity"/>
    <property type="evidence" value="ECO:0007669"/>
    <property type="project" value="UniProtKB-KW"/>
</dbReference>
<dbReference type="CDD" id="cd02243">
    <property type="entry name" value="cupin_11S_legumin_C"/>
    <property type="match status" value="1"/>
</dbReference>
<dbReference type="CDD" id="cd02242">
    <property type="entry name" value="cupin_11S_legumin_N"/>
    <property type="match status" value="1"/>
</dbReference>
<dbReference type="FunFam" id="2.60.120.10:FF:000073">
    <property type="entry name" value="Glycinin G1"/>
    <property type="match status" value="1"/>
</dbReference>
<dbReference type="Gene3D" id="2.60.120.10">
    <property type="entry name" value="Jelly Rolls"/>
    <property type="match status" value="2"/>
</dbReference>
<dbReference type="InterPro" id="IPR022379">
    <property type="entry name" value="11S_seedstore_CS"/>
</dbReference>
<dbReference type="InterPro" id="IPR006044">
    <property type="entry name" value="11S_seedstore_pln"/>
</dbReference>
<dbReference type="InterPro" id="IPR006045">
    <property type="entry name" value="Cupin_1"/>
</dbReference>
<dbReference type="InterPro" id="IPR014710">
    <property type="entry name" value="RmlC-like_jellyroll"/>
</dbReference>
<dbReference type="InterPro" id="IPR011051">
    <property type="entry name" value="RmlC_Cupin_sf"/>
</dbReference>
<dbReference type="InterPro" id="IPR050253">
    <property type="entry name" value="Seed_Storage-Functional"/>
</dbReference>
<dbReference type="PANTHER" id="PTHR31189:SF63">
    <property type="entry name" value="GLYCININ G5"/>
    <property type="match status" value="1"/>
</dbReference>
<dbReference type="PANTHER" id="PTHR31189">
    <property type="entry name" value="OS03G0336100 PROTEIN-RELATED"/>
    <property type="match status" value="1"/>
</dbReference>
<dbReference type="Pfam" id="PF00190">
    <property type="entry name" value="Cupin_1"/>
    <property type="match status" value="2"/>
</dbReference>
<dbReference type="PRINTS" id="PR00439">
    <property type="entry name" value="11SGLOBULIN"/>
</dbReference>
<dbReference type="SMART" id="SM00835">
    <property type="entry name" value="Cupin_1"/>
    <property type="match status" value="2"/>
</dbReference>
<dbReference type="SUPFAM" id="SSF51182">
    <property type="entry name" value="RmlC-like cupins"/>
    <property type="match status" value="1"/>
</dbReference>
<dbReference type="PROSITE" id="PS00305">
    <property type="entry name" value="11S_SEED_STORAGE"/>
    <property type="match status" value="1"/>
</dbReference>
<organism>
    <name type="scientific">Glycine max</name>
    <name type="common">Soybean</name>
    <name type="synonym">Glycine hispida</name>
    <dbReference type="NCBI Taxonomy" id="3847"/>
    <lineage>
        <taxon>Eukaryota</taxon>
        <taxon>Viridiplantae</taxon>
        <taxon>Streptophyta</taxon>
        <taxon>Embryophyta</taxon>
        <taxon>Tracheophyta</taxon>
        <taxon>Spermatophyta</taxon>
        <taxon>Magnoliopsida</taxon>
        <taxon>eudicotyledons</taxon>
        <taxon>Gunneridae</taxon>
        <taxon>Pentapetalae</taxon>
        <taxon>rosids</taxon>
        <taxon>fabids</taxon>
        <taxon>Fabales</taxon>
        <taxon>Fabaceae</taxon>
        <taxon>Papilionoideae</taxon>
        <taxon>50 kb inversion clade</taxon>
        <taxon>NPAAA clade</taxon>
        <taxon>indigoferoid/millettioid clade</taxon>
        <taxon>Phaseoleae</taxon>
        <taxon>Glycine</taxon>
        <taxon>Glycine subgen. Soja</taxon>
    </lineage>
</organism>
<keyword id="KW-0002">3D-structure</keyword>
<keyword id="KW-0020">Allergen</keyword>
<keyword id="KW-0025">Alternative splicing</keyword>
<keyword id="KW-1015">Disulfide bond</keyword>
<keyword id="KW-0256">Endoplasmic reticulum</keyword>
<keyword id="KW-0325">Glycoprotein</keyword>
<keyword id="KW-1185">Reference proteome</keyword>
<keyword id="KW-0708">Seed storage protein</keyword>
<keyword id="KW-0732">Signal</keyword>
<keyword id="KW-0758">Storage protein</keyword>
<keyword id="KW-0926">Vacuole</keyword>
<accession>P04347</accession>
<accession>C0KG62</accession>
<accession>C6T7B0</accession>
<accession>P93707</accession>
<accession>P93708</accession>
<accession>Q7GC77</accession>
<accession>Q9SB12</accession>
<feature type="signal peptide" evidence="1">
    <location>
        <begin position="1"/>
        <end position="24"/>
    </location>
</feature>
<feature type="chain" id="PRO_0000032023" description="Glycinin A3 subunit">
    <location>
        <begin position="25"/>
        <end position="344"/>
    </location>
</feature>
<feature type="chain" id="PRO_0000032024" description="Glycinin B4 subunit">
    <location>
        <begin position="345"/>
        <end position="516"/>
    </location>
</feature>
<feature type="domain" description="Cupin type-1 1" evidence="1">
    <location>
        <begin position="38"/>
        <end position="249"/>
    </location>
</feature>
<feature type="domain" description="Cupin type-1 2" evidence="1">
    <location>
        <begin position="357"/>
        <end position="502"/>
    </location>
</feature>
<feature type="region of interest" description="Disordered" evidence="3">
    <location>
        <begin position="113"/>
        <end position="135"/>
    </location>
</feature>
<feature type="region of interest" description="Disordered" evidence="3">
    <location>
        <begin position="198"/>
        <end position="226"/>
    </location>
</feature>
<feature type="region of interest" description="Disordered" evidence="3">
    <location>
        <begin position="244"/>
        <end position="345"/>
    </location>
</feature>
<feature type="compositionally biased region" description="Low complexity" evidence="3">
    <location>
        <begin position="117"/>
        <end position="133"/>
    </location>
</feature>
<feature type="compositionally biased region" description="Basic and acidic residues" evidence="3">
    <location>
        <begin position="247"/>
        <end position="260"/>
    </location>
</feature>
<feature type="compositionally biased region" description="Acidic residues" evidence="3">
    <location>
        <begin position="278"/>
        <end position="288"/>
    </location>
</feature>
<feature type="compositionally biased region" description="Acidic residues" evidence="3">
    <location>
        <begin position="307"/>
        <end position="316"/>
    </location>
</feature>
<feature type="compositionally biased region" description="Basic and acidic residues" evidence="3">
    <location>
        <begin position="317"/>
        <end position="337"/>
    </location>
</feature>
<feature type="glycosylation site" description="N-linked (GlcNAc...) asparagine" evidence="2">
    <location>
        <position position="79"/>
    </location>
</feature>
<feature type="disulfide bond" evidence="5">
    <location>
        <begin position="33"/>
        <end position="66"/>
    </location>
</feature>
<feature type="disulfide bond" description="Interchain (between A3 and B4 chains)" evidence="5">
    <location>
        <begin position="109"/>
        <end position="351"/>
    </location>
</feature>
<feature type="splice variant" id="VSP_060146" description="In isoform 2.">
    <original>P</original>
    <variation>PQITTSIYEGVVRPSYMK</variation>
    <location>
        <position position="516"/>
    </location>
</feature>
<feature type="sequence conflict" description="In Ref. 4; BAA74952, 5; BAB15802, 7; ACU17712 and 6; ACN11532." evidence="29" ref="4 5 7 6">
    <original>S</original>
    <variation>L</variation>
    <location>
        <position position="81"/>
    </location>
</feature>
<feature type="sequence conflict" description="In Ref. 3; BAA19058/BAA19059, 4; BAA74952, 5; BAB15802, 7; ACU17712 and 6; ACN11532." evidence="29" ref="3 4 5 7 6">
    <original>L</original>
    <variation>S</variation>
    <location>
        <position position="87"/>
    </location>
</feature>
<feature type="sequence conflict" description="In Ref. 3; BAA19059." evidence="29" ref="3">
    <original>A</original>
    <variation>E</variation>
    <location>
        <position position="101"/>
    </location>
</feature>
<feature type="sequence conflict" description="In Ref. 4; BAA74952, 5; BAB15802, 7; ACU17712 and 6; ACN11532." evidence="29" ref="4 5 7 6">
    <original>L</original>
    <variation>P</variation>
    <location>
        <position position="151"/>
    </location>
</feature>
<feature type="sequence conflict" description="In Ref. 3; BAA19058/BAA19059, 4; BAA74952, 5; BAB15802, 7; ACU17712 and 6; ACN11532." evidence="29" ref="3 4 5 7 6">
    <original>P</original>
    <variation>L</variation>
    <location>
        <position position="170"/>
    </location>
</feature>
<feature type="sequence conflict" description="In Ref. 6; ACN11532." evidence="29" ref="6">
    <original>RQQ</original>
    <variation>QQP</variation>
    <location>
        <begin position="219"/>
        <end position="221"/>
    </location>
</feature>
<feature type="sequence conflict" description="In Ref. 3; BAA19058/BAA19059, 4; BAA74952, 5; BAB15802 and 7; ACU17712." evidence="29" ref="3 4 5 7">
    <original>R</original>
    <variation>Q</variation>
    <location>
        <position position="219"/>
    </location>
</feature>
<feature type="sequence conflict" description="In Ref. 7; ACU17712." evidence="29" ref="7">
    <original>G</original>
    <variation>R</variation>
    <location>
        <position position="225"/>
    </location>
</feature>
<feature type="sequence conflict" description="In Ref. 3; BAA19058/BAA19059, 4; BAA74952, 5; BAB15802, 7; ACU17712 and 6; ACN11532." evidence="29" ref="3 4 5 7 6">
    <original>GR</original>
    <variation>EQ</variation>
    <location>
        <begin position="290"/>
        <end position="291"/>
    </location>
</feature>
<feature type="sequence conflict" description="In Ref. 6; ACN11532." evidence="29" ref="6">
    <original>E</original>
    <variation>G</variation>
    <location>
        <position position="315"/>
    </location>
</feature>
<feature type="sequence conflict" description="In Ref. 7; ACU17712." evidence="29" ref="7">
    <original>E</original>
    <variation>G</variation>
    <location>
        <position position="357"/>
    </location>
</feature>
<feature type="sequence conflict" description="In Ref. 3; BAA19058/BAA19059, 4; BAA74952, 5; BAB15802, 7; ACU17712 and 6; ACN11532." evidence="29" ref="3 4 5 7 6">
    <original>D</original>
    <variation>H</variation>
    <location>
        <position position="407"/>
    </location>
</feature>
<feature type="sequence conflict" description="In Ref. 3; BAA19058/BAA19059, 4; BAA74952, 5; BAB15802, 7; ACU17712 and 6; ACN11532." evidence="29" ref="3 4 5 7 6">
    <original>TM</original>
    <variation>IYV</variation>
    <location>
        <begin position="416"/>
        <end position="417"/>
    </location>
</feature>
<feature type="sequence conflict" description="In Ref. 3; BAA19058/BAA19059, 4; BAA74952, 5; BAB15802 and 6; ACN11532." evidence="29" ref="3 4 5 6">
    <original>PA</original>
    <variation>FV</variation>
    <location>
        <begin position="451"/>
        <end position="452"/>
    </location>
</feature>
<feature type="sequence conflict" description="In Ref. 3; BAA19058/BAA19059, 5; BAB15802 and 6; ACN11532." evidence="29" ref="3 5 6">
    <original>V</original>
    <variation>A</variation>
    <location>
        <position position="484"/>
    </location>
</feature>
<feature type="strand" evidence="30">
    <location>
        <begin position="45"/>
        <end position="48"/>
    </location>
</feature>
<feature type="strand" evidence="30">
    <location>
        <begin position="50"/>
        <end position="56"/>
    </location>
</feature>
<feature type="helix" evidence="30">
    <location>
        <begin position="62"/>
        <end position="67"/>
    </location>
</feature>
<feature type="strand" evidence="30">
    <location>
        <begin position="70"/>
        <end position="76"/>
    </location>
</feature>
<feature type="strand" evidence="30">
    <location>
        <begin position="80"/>
        <end position="86"/>
    </location>
</feature>
<feature type="strand" evidence="30">
    <location>
        <begin position="91"/>
        <end position="97"/>
    </location>
</feature>
<feature type="strand" evidence="30">
    <location>
        <begin position="99"/>
        <end position="104"/>
    </location>
</feature>
<feature type="strand" evidence="30">
    <location>
        <begin position="113"/>
        <end position="115"/>
    </location>
</feature>
<feature type="strand" evidence="30">
    <location>
        <begin position="132"/>
        <end position="136"/>
    </location>
</feature>
<feature type="strand" evidence="30">
    <location>
        <begin position="138"/>
        <end position="142"/>
    </location>
</feature>
<feature type="strand" evidence="30">
    <location>
        <begin position="145"/>
        <end position="149"/>
    </location>
</feature>
<feature type="strand" evidence="30">
    <location>
        <begin position="155"/>
        <end position="159"/>
    </location>
</feature>
<feature type="strand" evidence="30">
    <location>
        <begin position="161"/>
        <end position="163"/>
    </location>
</feature>
<feature type="strand" evidence="30">
    <location>
        <begin position="165"/>
        <end position="171"/>
    </location>
</feature>
<feature type="strand" evidence="30">
    <location>
        <begin position="187"/>
        <end position="191"/>
    </location>
</feature>
<feature type="helix" evidence="30">
    <location>
        <begin position="198"/>
        <end position="200"/>
    </location>
</feature>
<feature type="helix" evidence="30">
    <location>
        <begin position="228"/>
        <end position="231"/>
    </location>
</feature>
<feature type="helix" evidence="30">
    <location>
        <begin position="234"/>
        <end position="240"/>
    </location>
</feature>
<feature type="helix" evidence="30">
    <location>
        <begin position="245"/>
        <end position="250"/>
    </location>
</feature>
<feature type="strand" evidence="30">
    <location>
        <begin position="260"/>
        <end position="263"/>
    </location>
</feature>
<feature type="turn" evidence="31">
    <location>
        <begin position="269"/>
        <end position="271"/>
    </location>
</feature>
<feature type="turn" evidence="30">
    <location>
        <begin position="346"/>
        <end position="349"/>
    </location>
</feature>
<feature type="helix" evidence="30">
    <location>
        <begin position="350"/>
        <end position="352"/>
    </location>
</feature>
<feature type="strand" evidence="30">
    <location>
        <begin position="356"/>
        <end position="358"/>
    </location>
</feature>
<feature type="helix" evidence="30">
    <location>
        <begin position="362"/>
        <end position="364"/>
    </location>
</feature>
<feature type="strand" evidence="30">
    <location>
        <begin position="366"/>
        <end position="369"/>
    </location>
</feature>
<feature type="turn" evidence="30">
    <location>
        <begin position="370"/>
        <end position="372"/>
    </location>
</feature>
<feature type="strand" evidence="30">
    <location>
        <begin position="373"/>
        <end position="379"/>
    </location>
</feature>
<feature type="turn" evidence="30">
    <location>
        <begin position="380"/>
        <end position="382"/>
    </location>
</feature>
<feature type="helix" evidence="30">
    <location>
        <begin position="386"/>
        <end position="389"/>
    </location>
</feature>
<feature type="strand" evidence="30">
    <location>
        <begin position="392"/>
        <end position="398"/>
    </location>
</feature>
<feature type="strand" evidence="30">
    <location>
        <begin position="403"/>
        <end position="411"/>
    </location>
</feature>
<feature type="strand" evidence="30">
    <location>
        <begin position="414"/>
        <end position="427"/>
    </location>
</feature>
<feature type="strand" evidence="30">
    <location>
        <begin position="433"/>
        <end position="440"/>
    </location>
</feature>
<feature type="strand" evidence="30">
    <location>
        <begin position="444"/>
        <end position="447"/>
    </location>
</feature>
<feature type="strand" evidence="30">
    <location>
        <begin position="452"/>
        <end position="470"/>
    </location>
</feature>
<feature type="strand" evidence="30">
    <location>
        <begin position="475"/>
        <end position="477"/>
    </location>
</feature>
<feature type="helix" evidence="30">
    <location>
        <begin position="478"/>
        <end position="484"/>
    </location>
</feature>
<feature type="helix" evidence="30">
    <location>
        <begin position="487"/>
        <end position="494"/>
    </location>
</feature>
<feature type="helix" evidence="30">
    <location>
        <begin position="498"/>
        <end position="506"/>
    </location>
</feature>
<feature type="strand" evidence="30">
    <location>
        <begin position="510"/>
        <end position="514"/>
    </location>
</feature>
<proteinExistence type="evidence at protein level"/>
<name>GLYG5_SOYBN</name>